<protein>
    <recommendedName>
        <fullName evidence="1">D-aminoacyl-tRNA deacylase</fullName>
        <shortName evidence="1">DTD</shortName>
        <ecNumber evidence="1">3.1.1.96</ecNumber>
    </recommendedName>
    <alternativeName>
        <fullName evidence="1">Gly-tRNA(Ala) deacylase</fullName>
    </alternativeName>
</protein>
<organism>
    <name type="scientific">Escherichia coli O1:K1 / APEC</name>
    <dbReference type="NCBI Taxonomy" id="405955"/>
    <lineage>
        <taxon>Bacteria</taxon>
        <taxon>Pseudomonadati</taxon>
        <taxon>Pseudomonadota</taxon>
        <taxon>Gammaproteobacteria</taxon>
        <taxon>Enterobacterales</taxon>
        <taxon>Enterobacteriaceae</taxon>
        <taxon>Escherichia</taxon>
    </lineage>
</organism>
<accession>A1AI64</accession>
<comment type="function">
    <text evidence="1">An aminoacyl-tRNA editing enzyme that deacylates mischarged D-aminoacyl-tRNAs. Also deacylates mischarged glycyl-tRNA(Ala), protecting cells against glycine mischarging by AlaRS. Acts via tRNA-based rather than protein-based catalysis; rejects L-amino acids rather than detecting D-amino acids in the active site. By recycling D-aminoacyl-tRNA to D-amino acids and free tRNA molecules, this enzyme counteracts the toxicity associated with the formation of D-aminoacyl-tRNA entities in vivo and helps enforce protein L-homochirality.</text>
</comment>
<comment type="catalytic activity">
    <reaction evidence="1">
        <text>glycyl-tRNA(Ala) + H2O = tRNA(Ala) + glycine + H(+)</text>
        <dbReference type="Rhea" id="RHEA:53744"/>
        <dbReference type="Rhea" id="RHEA-COMP:9657"/>
        <dbReference type="Rhea" id="RHEA-COMP:13640"/>
        <dbReference type="ChEBI" id="CHEBI:15377"/>
        <dbReference type="ChEBI" id="CHEBI:15378"/>
        <dbReference type="ChEBI" id="CHEBI:57305"/>
        <dbReference type="ChEBI" id="CHEBI:78442"/>
        <dbReference type="ChEBI" id="CHEBI:78522"/>
        <dbReference type="EC" id="3.1.1.96"/>
    </reaction>
</comment>
<comment type="catalytic activity">
    <reaction evidence="1">
        <text>a D-aminoacyl-tRNA + H2O = a tRNA + a D-alpha-amino acid + H(+)</text>
        <dbReference type="Rhea" id="RHEA:13953"/>
        <dbReference type="Rhea" id="RHEA-COMP:10123"/>
        <dbReference type="Rhea" id="RHEA-COMP:10124"/>
        <dbReference type="ChEBI" id="CHEBI:15377"/>
        <dbReference type="ChEBI" id="CHEBI:15378"/>
        <dbReference type="ChEBI" id="CHEBI:59871"/>
        <dbReference type="ChEBI" id="CHEBI:78442"/>
        <dbReference type="ChEBI" id="CHEBI:79333"/>
        <dbReference type="EC" id="3.1.1.96"/>
    </reaction>
</comment>
<comment type="subunit">
    <text evidence="1">Homodimer.</text>
</comment>
<comment type="subcellular location">
    <subcellularLocation>
        <location evidence="1">Cytoplasm</location>
    </subcellularLocation>
</comment>
<comment type="domain">
    <text evidence="1">A Gly-cisPro motif from one monomer fits into the active site of the other monomer to allow specific chiral rejection of L-amino acids.</text>
</comment>
<comment type="similarity">
    <text evidence="1">Belongs to the DTD family.</text>
</comment>
<evidence type="ECO:0000255" key="1">
    <source>
        <dbReference type="HAMAP-Rule" id="MF_00518"/>
    </source>
</evidence>
<feature type="chain" id="PRO_1000050831" description="D-aminoacyl-tRNA deacylase">
    <location>
        <begin position="1"/>
        <end position="145"/>
    </location>
</feature>
<feature type="short sequence motif" description="Gly-cisPro motif, important for rejection of L-amino acids" evidence="1">
    <location>
        <begin position="137"/>
        <end position="138"/>
    </location>
</feature>
<proteinExistence type="inferred from homology"/>
<reference key="1">
    <citation type="journal article" date="2007" name="J. Bacteriol.">
        <title>The genome sequence of avian pathogenic Escherichia coli strain O1:K1:H7 shares strong similarities with human extraintestinal pathogenic E. coli genomes.</title>
        <authorList>
            <person name="Johnson T.J."/>
            <person name="Kariyawasam S."/>
            <person name="Wannemuehler Y."/>
            <person name="Mangiamele P."/>
            <person name="Johnson S.J."/>
            <person name="Doetkott C."/>
            <person name="Skyberg J.A."/>
            <person name="Lynne A.M."/>
            <person name="Johnson J.R."/>
            <person name="Nolan L.K."/>
        </authorList>
    </citation>
    <scope>NUCLEOTIDE SEQUENCE [LARGE SCALE GENOMIC DNA]</scope>
</reference>
<dbReference type="EC" id="3.1.1.96" evidence="1"/>
<dbReference type="EMBL" id="CP000468">
    <property type="protein sequence ID" value="ABJ03354.1"/>
    <property type="molecule type" value="Genomic_DNA"/>
</dbReference>
<dbReference type="RefSeq" id="WP_000560983.1">
    <property type="nucleotide sequence ID" value="NZ_CADILS010000014.1"/>
</dbReference>
<dbReference type="SMR" id="A1AI64"/>
<dbReference type="GeneID" id="93778051"/>
<dbReference type="KEGG" id="ecv:APECO1_2580"/>
<dbReference type="HOGENOM" id="CLU_076901_1_0_6"/>
<dbReference type="Proteomes" id="UP000008216">
    <property type="component" value="Chromosome"/>
</dbReference>
<dbReference type="GO" id="GO:0005737">
    <property type="term" value="C:cytoplasm"/>
    <property type="evidence" value="ECO:0007669"/>
    <property type="project" value="UniProtKB-SubCell"/>
</dbReference>
<dbReference type="GO" id="GO:0051500">
    <property type="term" value="F:D-tyrosyl-tRNA(Tyr) deacylase activity"/>
    <property type="evidence" value="ECO:0007669"/>
    <property type="project" value="TreeGrafter"/>
</dbReference>
<dbReference type="GO" id="GO:0106026">
    <property type="term" value="F:Gly-tRNA(Ala) deacylase activity"/>
    <property type="evidence" value="ECO:0007669"/>
    <property type="project" value="UniProtKB-UniRule"/>
</dbReference>
<dbReference type="GO" id="GO:0043908">
    <property type="term" value="F:Ser(Gly)-tRNA(Ala) hydrolase activity"/>
    <property type="evidence" value="ECO:0007669"/>
    <property type="project" value="UniProtKB-UniRule"/>
</dbReference>
<dbReference type="GO" id="GO:0000049">
    <property type="term" value="F:tRNA binding"/>
    <property type="evidence" value="ECO:0007669"/>
    <property type="project" value="UniProtKB-UniRule"/>
</dbReference>
<dbReference type="GO" id="GO:0019478">
    <property type="term" value="P:D-amino acid catabolic process"/>
    <property type="evidence" value="ECO:0007669"/>
    <property type="project" value="UniProtKB-UniRule"/>
</dbReference>
<dbReference type="CDD" id="cd00563">
    <property type="entry name" value="Dtyr_deacylase"/>
    <property type="match status" value="1"/>
</dbReference>
<dbReference type="FunFam" id="3.50.80.10:FF:000001">
    <property type="entry name" value="D-aminoacyl-tRNA deacylase"/>
    <property type="match status" value="1"/>
</dbReference>
<dbReference type="Gene3D" id="3.50.80.10">
    <property type="entry name" value="D-tyrosyl-tRNA(Tyr) deacylase"/>
    <property type="match status" value="1"/>
</dbReference>
<dbReference type="HAMAP" id="MF_00518">
    <property type="entry name" value="Deacylase_Dtd"/>
    <property type="match status" value="1"/>
</dbReference>
<dbReference type="InterPro" id="IPR003732">
    <property type="entry name" value="Daa-tRNA_deacyls_DTD"/>
</dbReference>
<dbReference type="InterPro" id="IPR023509">
    <property type="entry name" value="DTD-like_sf"/>
</dbReference>
<dbReference type="NCBIfam" id="TIGR00256">
    <property type="entry name" value="D-aminoacyl-tRNA deacylase"/>
    <property type="match status" value="1"/>
</dbReference>
<dbReference type="PANTHER" id="PTHR10472:SF5">
    <property type="entry name" value="D-AMINOACYL-TRNA DEACYLASE 1"/>
    <property type="match status" value="1"/>
</dbReference>
<dbReference type="PANTHER" id="PTHR10472">
    <property type="entry name" value="D-TYROSYL-TRNA TYR DEACYLASE"/>
    <property type="match status" value="1"/>
</dbReference>
<dbReference type="Pfam" id="PF02580">
    <property type="entry name" value="Tyr_Deacylase"/>
    <property type="match status" value="1"/>
</dbReference>
<dbReference type="SUPFAM" id="SSF69500">
    <property type="entry name" value="DTD-like"/>
    <property type="match status" value="1"/>
</dbReference>
<keyword id="KW-0963">Cytoplasm</keyword>
<keyword id="KW-0378">Hydrolase</keyword>
<keyword id="KW-1185">Reference proteome</keyword>
<keyword id="KW-0694">RNA-binding</keyword>
<keyword id="KW-0820">tRNA-binding</keyword>
<sequence length="145" mass="15950">MIALIQRVTRASVTVEGEVTGEIGAGLLVLLGVEKDDDEQKANRLCERVLGYRIFSDAEGKMNLNVQQAGGSVLVVSQFTLAADTERGMRPSFSKGASPDRAEALYDYFVERCRQQEMNTQTGRFAADMQVSLVNDGPVTFWLQV</sequence>
<gene>
    <name evidence="1" type="primary">dtd</name>
    <name type="ordered locus">Ecok1_38600</name>
    <name type="ORF">APECO1_2580</name>
</gene>
<name>DTD_ECOK1</name>